<name>DLT_ORYSJ</name>
<gene>
    <name evidence="7" type="primary">DLT</name>
    <name evidence="10" type="synonym">GRAS2</name>
    <name evidence="8" type="synonym">SMOS2</name>
    <name evidence="13" type="ordered locus">Os06g0127800</name>
    <name evidence="9" type="ordered locus">LOC_Os06g03710</name>
    <name evidence="14" type="ORF">OsJ_19967</name>
    <name evidence="12" type="ORF">OSJNBa0038F22.20</name>
    <name evidence="11" type="ORF">P0425F02.54</name>
</gene>
<evidence type="ECO:0000255" key="1">
    <source>
        <dbReference type="PROSITE-ProRule" id="PRU01191"/>
    </source>
</evidence>
<evidence type="ECO:0000256" key="2">
    <source>
        <dbReference type="SAM" id="MobiDB-lite"/>
    </source>
</evidence>
<evidence type="ECO:0000269" key="3">
    <source>
    </source>
</evidence>
<evidence type="ECO:0000269" key="4">
    <source>
    </source>
</evidence>
<evidence type="ECO:0000269" key="5">
    <source>
    </source>
</evidence>
<evidence type="ECO:0000303" key="6">
    <source>
    </source>
</evidence>
<evidence type="ECO:0000303" key="7">
    <source>
    </source>
</evidence>
<evidence type="ECO:0000303" key="8">
    <source>
    </source>
</evidence>
<evidence type="ECO:0000305" key="9"/>
<evidence type="ECO:0000312" key="10">
    <source>
        <dbReference type="EMBL" id="AGL08204.1"/>
    </source>
</evidence>
<evidence type="ECO:0000312" key="11">
    <source>
        <dbReference type="EMBL" id="BAA90816.1"/>
    </source>
</evidence>
<evidence type="ECO:0000312" key="12">
    <source>
        <dbReference type="EMBL" id="BAC24836.1"/>
    </source>
</evidence>
<evidence type="ECO:0000312" key="13">
    <source>
        <dbReference type="EMBL" id="BAS95938.1"/>
    </source>
</evidence>
<evidence type="ECO:0000312" key="14">
    <source>
        <dbReference type="EMBL" id="EAZ35680.1"/>
    </source>
</evidence>
<dbReference type="EMBL" id="JX310319">
    <property type="protein sequence ID" value="AGL08204.1"/>
    <property type="molecule type" value="mRNA"/>
</dbReference>
<dbReference type="EMBL" id="AP001168">
    <property type="protein sequence ID" value="BAA90816.1"/>
    <property type="molecule type" value="Genomic_DNA"/>
</dbReference>
<dbReference type="EMBL" id="AP002838">
    <property type="protein sequence ID" value="BAC24836.1"/>
    <property type="molecule type" value="Genomic_DNA"/>
</dbReference>
<dbReference type="EMBL" id="AP008212">
    <property type="protein sequence ID" value="BAF18581.1"/>
    <property type="molecule type" value="Genomic_DNA"/>
</dbReference>
<dbReference type="EMBL" id="AP014962">
    <property type="protein sequence ID" value="BAS95938.1"/>
    <property type="molecule type" value="Genomic_DNA"/>
</dbReference>
<dbReference type="EMBL" id="CM000143">
    <property type="protein sequence ID" value="EAZ35680.1"/>
    <property type="molecule type" value="Genomic_DNA"/>
</dbReference>
<dbReference type="RefSeq" id="XP_015642886.1">
    <property type="nucleotide sequence ID" value="XM_015787400.1"/>
</dbReference>
<dbReference type="RefSeq" id="XP_015642887.1">
    <property type="nucleotide sequence ID" value="XM_015787401.1"/>
</dbReference>
<dbReference type="SMR" id="Q9LWU9"/>
<dbReference type="FunCoup" id="Q9LWU9">
    <property type="interactions" value="1094"/>
</dbReference>
<dbReference type="STRING" id="39947.Q9LWU9"/>
<dbReference type="PaxDb" id="39947-Q9LWU9"/>
<dbReference type="EnsemblPlants" id="Os06t0127800-01">
    <property type="protein sequence ID" value="Os06t0127800-01"/>
    <property type="gene ID" value="Os06g0127800"/>
</dbReference>
<dbReference type="Gramene" id="Os06t0127800-01">
    <property type="protein sequence ID" value="Os06t0127800-01"/>
    <property type="gene ID" value="Os06g0127800"/>
</dbReference>
<dbReference type="KEGG" id="dosa:Os06g0127800"/>
<dbReference type="eggNOG" id="ENOG502QU5D">
    <property type="taxonomic scope" value="Eukaryota"/>
</dbReference>
<dbReference type="HOGENOM" id="CLU_016521_0_0_1"/>
<dbReference type="InParanoid" id="Q9LWU9"/>
<dbReference type="OMA" id="AFPHAGT"/>
<dbReference type="OrthoDB" id="1902659at2759"/>
<dbReference type="PlantReactome" id="R-OSA-5632095">
    <property type="pathway name" value="Brassinosteroid signaling"/>
</dbReference>
<dbReference type="Proteomes" id="UP000000763">
    <property type="component" value="Chromosome 6"/>
</dbReference>
<dbReference type="Proteomes" id="UP000007752">
    <property type="component" value="Chromosome 6"/>
</dbReference>
<dbReference type="Proteomes" id="UP000059680">
    <property type="component" value="Chromosome 6"/>
</dbReference>
<dbReference type="GO" id="GO:0005634">
    <property type="term" value="C:nucleus"/>
    <property type="evidence" value="ECO:0000314"/>
    <property type="project" value="UniProtKB"/>
</dbReference>
<dbReference type="GO" id="GO:0003700">
    <property type="term" value="F:DNA-binding transcription factor activity"/>
    <property type="evidence" value="ECO:0000318"/>
    <property type="project" value="GO_Central"/>
</dbReference>
<dbReference type="GO" id="GO:0043565">
    <property type="term" value="F:sequence-specific DNA binding"/>
    <property type="evidence" value="ECO:0000318"/>
    <property type="project" value="GO_Central"/>
</dbReference>
<dbReference type="GO" id="GO:0009742">
    <property type="term" value="P:brassinosteroid mediated signaling pathway"/>
    <property type="evidence" value="ECO:0007669"/>
    <property type="project" value="UniProtKB-KW"/>
</dbReference>
<dbReference type="GO" id="GO:1900459">
    <property type="term" value="P:positive regulation of brassinosteroid mediated signaling pathway"/>
    <property type="evidence" value="ECO:0000315"/>
    <property type="project" value="UniProtKB"/>
</dbReference>
<dbReference type="GO" id="GO:0006355">
    <property type="term" value="P:regulation of DNA-templated transcription"/>
    <property type="evidence" value="ECO:0000318"/>
    <property type="project" value="GO_Central"/>
</dbReference>
<dbReference type="GO" id="GO:0007346">
    <property type="term" value="P:regulation of mitotic cell cycle"/>
    <property type="evidence" value="ECO:0007669"/>
    <property type="project" value="EnsemblPlants"/>
</dbReference>
<dbReference type="InterPro" id="IPR005202">
    <property type="entry name" value="TF_GRAS"/>
</dbReference>
<dbReference type="PANTHER" id="PTHR31636">
    <property type="entry name" value="OSJNBA0084A10.13 PROTEIN-RELATED"/>
    <property type="match status" value="1"/>
</dbReference>
<dbReference type="Pfam" id="PF03514">
    <property type="entry name" value="GRAS"/>
    <property type="match status" value="1"/>
</dbReference>
<dbReference type="PROSITE" id="PS50985">
    <property type="entry name" value="GRAS"/>
    <property type="match status" value="1"/>
</dbReference>
<feature type="chain" id="PRO_0000439016" description="Protein DWARF AND LOW-TILLERING">
    <location>
        <begin position="1"/>
        <end position="617"/>
    </location>
</feature>
<feature type="domain" description="GRAS" evidence="1">
    <location>
        <begin position="208"/>
        <end position="594"/>
    </location>
</feature>
<feature type="region of interest" description="Disordered" evidence="2">
    <location>
        <begin position="29"/>
        <end position="92"/>
    </location>
</feature>
<feature type="region of interest" description="Disordered" evidence="2">
    <location>
        <begin position="159"/>
        <end position="206"/>
    </location>
</feature>
<feature type="region of interest" description="Leucine repeat I (LRI)" evidence="1">
    <location>
        <begin position="215"/>
        <end position="295"/>
    </location>
</feature>
<feature type="region of interest" description="VHIID" evidence="1">
    <location>
        <begin position="301"/>
        <end position="366"/>
    </location>
</feature>
<feature type="region of interest" description="Leucine repeat II (LRII)" evidence="1">
    <location>
        <begin position="376"/>
        <end position="408"/>
    </location>
</feature>
<feature type="region of interest" description="PFYRE" evidence="1">
    <location>
        <begin position="417"/>
        <end position="508"/>
    </location>
</feature>
<feature type="region of interest" description="SAW" evidence="1">
    <location>
        <begin position="511"/>
        <end position="594"/>
    </location>
</feature>
<feature type="region of interest" description="Disordered" evidence="2">
    <location>
        <begin position="596"/>
        <end position="617"/>
    </location>
</feature>
<feature type="short sequence motif" description="VHIID" evidence="1">
    <location>
        <begin position="332"/>
        <end position="336"/>
    </location>
</feature>
<feature type="compositionally biased region" description="Low complexity" evidence="2">
    <location>
        <begin position="171"/>
        <end position="187"/>
    </location>
</feature>
<feature type="compositionally biased region" description="Low complexity" evidence="2">
    <location>
        <begin position="603"/>
        <end position="617"/>
    </location>
</feature>
<feature type="sequence conflict" description="In Ref. 5; EAZ35680." evidence="9" ref="5">
    <original>P</original>
    <variation>H</variation>
    <location>
        <position position="493"/>
    </location>
</feature>
<proteinExistence type="evidence at protein level"/>
<sequence>MLAGCSFSSSRHQMSTAQRFDILPCGFSKRGSRGDGAAPRVAGDARSGATTCSFRTHPAPPVTQSVSWGAKPEPGGNGNGAHRAVKRAHDEDAVEEYGPIVRAKRTRMGGDGDEVWFHQSIAGTMQATAAGEGEEAEEEKVFLVPSAAAFPHGMAAAGPSLAAAKKEEYSKSPSDSSSSSGTDGGSSAMMPPPQPPEFDARNGVPAPGQAEREALELVRALTACADSLSAGNHEAANYYLARLGEMASPAGPTPMHRVAAYFTEALALRVVRMWPHMFDIGPPRELTDDAFGGGDDDAMALRILNAITPIPRFLHFTLNERLLREFEGHERVHVIDFDIKQGLQWPGLLQSLAARAVPPAHVRITGVGESRQELQETGARLARVAAALGLAFEFHAVVDRLEDVRLWMLHVKRGECVAVNCVLAMHRLLRDDAALTDFLGLARSTGATILLLGEHEGGGLNSGRWEARFARALRYYAAAFDAVDAAGLPEASPARAKAEEMFAREIRNAVAFEGPERFERHESFAGWRRRMEDGGGFKNAGIGEREAMQGRMIARMFGPDKYTVQAHGGGGSGGGEALTLRWLDQPLYTVTAWTPAGDGAGGSTVSASTTASHSQQS</sequence>
<reference key="1">
    <citation type="submission" date="2012-07" db="EMBL/GenBank/DDBJ databases">
        <title>Oryza sativa cultivar Dongjin scarecrow-like transcription factor GRAS2 (GRAS2) mRNA.</title>
        <authorList>
            <person name="Zhou Y."/>
            <person name="Offler C.E."/>
            <person name="Patrick J.W."/>
        </authorList>
    </citation>
    <scope>NUCLEOTIDE SEQUENCE [MRNA]</scope>
    <source>
        <strain>cv. Dongjin</strain>
    </source>
</reference>
<reference key="2">
    <citation type="journal article" date="2005" name="Nature">
        <title>The map-based sequence of the rice genome.</title>
        <authorList>
            <consortium name="International rice genome sequencing project (IRGSP)"/>
        </authorList>
    </citation>
    <scope>NUCLEOTIDE SEQUENCE [LARGE SCALE GENOMIC DNA]</scope>
    <source>
        <strain>cv. Nipponbare</strain>
    </source>
</reference>
<reference key="3">
    <citation type="journal article" date="2008" name="Nucleic Acids Res.">
        <title>The rice annotation project database (RAP-DB): 2008 update.</title>
        <authorList>
            <consortium name="The rice annotation project (RAP)"/>
        </authorList>
    </citation>
    <scope>GENOME REANNOTATION</scope>
    <source>
        <strain>cv. Nipponbare</strain>
    </source>
</reference>
<reference key="4">
    <citation type="journal article" date="2013" name="Rice">
        <title>Improvement of the Oryza sativa Nipponbare reference genome using next generation sequence and optical map data.</title>
        <authorList>
            <person name="Kawahara Y."/>
            <person name="de la Bastide M."/>
            <person name="Hamilton J.P."/>
            <person name="Kanamori H."/>
            <person name="McCombie W.R."/>
            <person name="Ouyang S."/>
            <person name="Schwartz D.C."/>
            <person name="Tanaka T."/>
            <person name="Wu J."/>
            <person name="Zhou S."/>
            <person name="Childs K.L."/>
            <person name="Davidson R.M."/>
            <person name="Lin H."/>
            <person name="Quesada-Ocampo L."/>
            <person name="Vaillancourt B."/>
            <person name="Sakai H."/>
            <person name="Lee S.S."/>
            <person name="Kim J."/>
            <person name="Numa H."/>
            <person name="Itoh T."/>
            <person name="Buell C.R."/>
            <person name="Matsumoto T."/>
        </authorList>
    </citation>
    <scope>GENOME REANNOTATION</scope>
    <source>
        <strain>cv. Nipponbare</strain>
    </source>
</reference>
<reference key="5">
    <citation type="journal article" date="2005" name="PLoS Biol.">
        <title>The genomes of Oryza sativa: a history of duplications.</title>
        <authorList>
            <person name="Yu J."/>
            <person name="Wang J."/>
            <person name="Lin W."/>
            <person name="Li S."/>
            <person name="Li H."/>
            <person name="Zhou J."/>
            <person name="Ni P."/>
            <person name="Dong W."/>
            <person name="Hu S."/>
            <person name="Zeng C."/>
            <person name="Zhang J."/>
            <person name="Zhang Y."/>
            <person name="Li R."/>
            <person name="Xu Z."/>
            <person name="Li S."/>
            <person name="Li X."/>
            <person name="Zheng H."/>
            <person name="Cong L."/>
            <person name="Lin L."/>
            <person name="Yin J."/>
            <person name="Geng J."/>
            <person name="Li G."/>
            <person name="Shi J."/>
            <person name="Liu J."/>
            <person name="Lv H."/>
            <person name="Li J."/>
            <person name="Wang J."/>
            <person name="Deng Y."/>
            <person name="Ran L."/>
            <person name="Shi X."/>
            <person name="Wang X."/>
            <person name="Wu Q."/>
            <person name="Li C."/>
            <person name="Ren X."/>
            <person name="Wang J."/>
            <person name="Wang X."/>
            <person name="Li D."/>
            <person name="Liu D."/>
            <person name="Zhang X."/>
            <person name="Ji Z."/>
            <person name="Zhao W."/>
            <person name="Sun Y."/>
            <person name="Zhang Z."/>
            <person name="Bao J."/>
            <person name="Han Y."/>
            <person name="Dong L."/>
            <person name="Ji J."/>
            <person name="Chen P."/>
            <person name="Wu S."/>
            <person name="Liu J."/>
            <person name="Xiao Y."/>
            <person name="Bu D."/>
            <person name="Tan J."/>
            <person name="Yang L."/>
            <person name="Ye C."/>
            <person name="Zhang J."/>
            <person name="Xu J."/>
            <person name="Zhou Y."/>
            <person name="Yu Y."/>
            <person name="Zhang B."/>
            <person name="Zhuang S."/>
            <person name="Wei H."/>
            <person name="Liu B."/>
            <person name="Lei M."/>
            <person name="Yu H."/>
            <person name="Li Y."/>
            <person name="Xu H."/>
            <person name="Wei S."/>
            <person name="He X."/>
            <person name="Fang L."/>
            <person name="Zhang Z."/>
            <person name="Zhang Y."/>
            <person name="Huang X."/>
            <person name="Su Z."/>
            <person name="Tong W."/>
            <person name="Li J."/>
            <person name="Tong Z."/>
            <person name="Li S."/>
            <person name="Ye J."/>
            <person name="Wang L."/>
            <person name="Fang L."/>
            <person name="Lei T."/>
            <person name="Chen C.-S."/>
            <person name="Chen H.-C."/>
            <person name="Xu Z."/>
            <person name="Li H."/>
            <person name="Huang H."/>
            <person name="Zhang F."/>
            <person name="Xu H."/>
            <person name="Li N."/>
            <person name="Zhao C."/>
            <person name="Li S."/>
            <person name="Dong L."/>
            <person name="Huang Y."/>
            <person name="Li L."/>
            <person name="Xi Y."/>
            <person name="Qi Q."/>
            <person name="Li W."/>
            <person name="Zhang B."/>
            <person name="Hu W."/>
            <person name="Zhang Y."/>
            <person name="Tian X."/>
            <person name="Jiao Y."/>
            <person name="Liang X."/>
            <person name="Jin J."/>
            <person name="Gao L."/>
            <person name="Zheng W."/>
            <person name="Hao B."/>
            <person name="Liu S.-M."/>
            <person name="Wang W."/>
            <person name="Yuan L."/>
            <person name="Cao M."/>
            <person name="McDermott J."/>
            <person name="Samudrala R."/>
            <person name="Wang J."/>
            <person name="Wong G.K.-S."/>
            <person name="Yang H."/>
        </authorList>
    </citation>
    <scope>NUCLEOTIDE SEQUENCE [LARGE SCALE GENOMIC DNA]</scope>
    <source>
        <strain>cv. Nipponbare</strain>
    </source>
</reference>
<reference key="6">
    <citation type="journal article" date="2004" name="Plant Mol. Biol.">
        <title>Genome-wide analysis of the GRAS gene family in rice and Arabidopsis.</title>
        <authorList>
            <person name="Tian C."/>
            <person name="Wan P."/>
            <person name="Sun S."/>
            <person name="Li J."/>
            <person name="Chen M."/>
        </authorList>
    </citation>
    <scope>GENE FAMILY</scope>
</reference>
<reference key="7">
    <citation type="journal article" date="2009" name="Plant J.">
        <title>DWARF AND LOW-TILLERING, a new member of the GRAS family, plays positive roles in brassinosteroid signaling in rice.</title>
        <authorList>
            <person name="Tong H."/>
            <person name="Jin Y."/>
            <person name="Liu W."/>
            <person name="Li F."/>
            <person name="Fang J."/>
            <person name="Yin Y."/>
            <person name="Qian Q."/>
            <person name="Zhu L."/>
            <person name="Chu C."/>
        </authorList>
    </citation>
    <scope>FUNCTION</scope>
    <scope>INDUCTION</scope>
    <scope>DISRUPTION PHENOTYPE</scope>
</reference>
<reference key="8">
    <citation type="journal article" date="2012" name="Plant Cell">
        <title>DWARF AND LOW-TILLERING acts as a direct downstream target of a GSK3/SHAGGY-like kinase to mediate brassinosteroid responses in rice.</title>
        <authorList>
            <person name="Tong H."/>
            <person name="Liu L."/>
            <person name="Jin Y."/>
            <person name="Du L."/>
            <person name="Yin Y."/>
            <person name="Qian Q."/>
            <person name="Zhu L."/>
            <person name="Chu C."/>
        </authorList>
    </citation>
    <scope>FUNCTION</scope>
    <scope>INTERACTION WITH GSK2</scope>
    <scope>SUBCELLULAR LOCATION</scope>
    <scope>PHOSPHORYLATION</scope>
</reference>
<reference key="9">
    <citation type="journal article" date="2017" name="Mol. Plant">
        <title>SMALL ORGAN SIZE 1 and SMALL ORGAN SIZE 2/DWARF AND LOW-TILLERING form a complex to integrate auxin and brassinosteroid signaling in rice.</title>
        <authorList>
            <person name="Hirano K."/>
            <person name="Yoshida H."/>
            <person name="Aya K."/>
            <person name="Kawamura M."/>
            <person name="Hayashi M."/>
            <person name="Hobo T."/>
            <person name="Sato-Izawa K."/>
            <person name="Kitano H."/>
            <person name="Ueguchi-Tanaka M."/>
            <person name="Matsuoka M."/>
        </authorList>
    </citation>
    <scope>FUNCTION</scope>
    <scope>INTERACTION WITH SMOS1</scope>
    <scope>DISRUPTION PHENOTYPE</scope>
</reference>
<organism>
    <name type="scientific">Oryza sativa subsp. japonica</name>
    <name type="common">Rice</name>
    <dbReference type="NCBI Taxonomy" id="39947"/>
    <lineage>
        <taxon>Eukaryota</taxon>
        <taxon>Viridiplantae</taxon>
        <taxon>Streptophyta</taxon>
        <taxon>Embryophyta</taxon>
        <taxon>Tracheophyta</taxon>
        <taxon>Spermatophyta</taxon>
        <taxon>Magnoliopsida</taxon>
        <taxon>Liliopsida</taxon>
        <taxon>Poales</taxon>
        <taxon>Poaceae</taxon>
        <taxon>BOP clade</taxon>
        <taxon>Oryzoideae</taxon>
        <taxon>Oryzeae</taxon>
        <taxon>Oryzinae</taxon>
        <taxon>Oryza</taxon>
        <taxon>Oryza sativa</taxon>
    </lineage>
</organism>
<comment type="function">
    <text evidence="5">Probable transcription factor that acts as a positive regulator of brassinosteroid (BR) signaling (PubMed:19220793, PubMed:22685166). Functions downstream of BRI1 and GSK2 to modulate BR responses. Acts as a direct target of GSK2 kinase to mediate BR responses (PubMed:22685166). Involved in feedback inhibition of BR biosynthetic genes. Repressed by BZR1 (PubMed:19220793). Cooperatively functions in a transactivating complex with SMOS1 to enhance the transcription of the SMOS1 target PHI-1, and regulate plant organ size (PubMed:28069545). Interaction between SMOS1 and DLT is a crosstalk point for auxin and brassinosteroid signaling (PubMed:28069545).</text>
</comment>
<comment type="subunit">
    <text evidence="4 5">Interacts with GSK2 (PubMed:22685166). Interacts with SMOS1 (via C-terminus) (PubMed:28069545).</text>
</comment>
<comment type="subcellular location">
    <subcellularLocation>
        <location evidence="4">Nucleus</location>
    </subcellularLocation>
</comment>
<comment type="tissue specificity">
    <text evidence="3">Expressed in the shoot apical meristem (SAM) and elongating cells of young seedlings. Expressed in leaf joints, culms, internodes, stems, young panicles, primary roots and lateral roots.</text>
</comment>
<comment type="induction">
    <text evidence="3">Down-regulated by 24-epibrassinolide.</text>
</comment>
<comment type="PTM">
    <text evidence="4">Phosphorylated on serine and threonine residues by GSK2. Dephosphorylated during response to brassinosteroid.</text>
</comment>
<comment type="disruption phenotype">
    <text evidence="3 5">Semi-dwarf phenotype with small and wide leaves. Erect leaf and panicle phenotype. Reduced lamina joint bending angles. Reduced tiller number and seed set. Reduced brassinosteroid sensitivity and altered expression of brassinosteroid-responsive genes (PubMed:19220793, PubMed:28069545). Decreased cell size, increased cell number, and abnormal cell arrangement and microtubule orientation (PubMed:28069545).</text>
</comment>
<comment type="similarity">
    <text evidence="9">Belongs to the GRAS family.</text>
</comment>
<accession>Q9LWU9</accession>
<accession>A0A1B0NNH8</accession>
<accession>A3B7Z1</accession>
<accession>Q8H640</accession>
<keyword id="KW-1070">Brassinosteroid signaling pathway</keyword>
<keyword id="KW-0539">Nucleus</keyword>
<keyword id="KW-1185">Reference proteome</keyword>
<keyword id="KW-0804">Transcription</keyword>
<keyword id="KW-0805">Transcription regulation</keyword>
<protein>
    <recommendedName>
        <fullName evidence="7">Protein DWARF AND LOW-TILLERING</fullName>
    </recommendedName>
    <alternativeName>
        <fullName evidence="6">GRAS family protein 32</fullName>
        <shortName evidence="6">OsGRAS-32</shortName>
    </alternativeName>
    <alternativeName>
        <fullName evidence="8">Protein SMALL ORGAN SIZE 2</fullName>
    </alternativeName>
</protein>